<feature type="chain" id="PRO_0000292522" description="Vacuolar protein sorting-associated protein 27">
    <location>
        <begin position="1"/>
        <end position="732"/>
    </location>
</feature>
<feature type="domain" description="VHS" evidence="4">
    <location>
        <begin position="23"/>
        <end position="166"/>
    </location>
</feature>
<feature type="domain" description="UIM 1" evidence="3">
    <location>
        <begin position="271"/>
        <end position="290"/>
    </location>
</feature>
<feature type="domain" description="UIM 2" evidence="3">
    <location>
        <begin position="313"/>
        <end position="332"/>
    </location>
</feature>
<feature type="zinc finger region" description="FYVE-type; atypical" evidence="2">
    <location>
        <begin position="187"/>
        <end position="247"/>
    </location>
</feature>
<feature type="region of interest" description="Disordered" evidence="5">
    <location>
        <begin position="245"/>
        <end position="272"/>
    </location>
</feature>
<feature type="region of interest" description="Disordered" evidence="5">
    <location>
        <begin position="287"/>
        <end position="316"/>
    </location>
</feature>
<feature type="region of interest" description="Disordered" evidence="5">
    <location>
        <begin position="329"/>
        <end position="357"/>
    </location>
</feature>
<feature type="region of interest" description="Disordered" evidence="5">
    <location>
        <begin position="483"/>
        <end position="732"/>
    </location>
</feature>
<feature type="compositionally biased region" description="Polar residues" evidence="5">
    <location>
        <begin position="253"/>
        <end position="266"/>
    </location>
</feature>
<feature type="compositionally biased region" description="Basic and acidic residues" evidence="5">
    <location>
        <begin position="329"/>
        <end position="340"/>
    </location>
</feature>
<feature type="compositionally biased region" description="Polar residues" evidence="5">
    <location>
        <begin position="492"/>
        <end position="501"/>
    </location>
</feature>
<feature type="compositionally biased region" description="Low complexity" evidence="5">
    <location>
        <begin position="502"/>
        <end position="513"/>
    </location>
</feature>
<feature type="compositionally biased region" description="Low complexity" evidence="5">
    <location>
        <begin position="520"/>
        <end position="542"/>
    </location>
</feature>
<feature type="compositionally biased region" description="Polar residues" evidence="5">
    <location>
        <begin position="596"/>
        <end position="612"/>
    </location>
</feature>
<feature type="compositionally biased region" description="Basic and acidic residues" evidence="5">
    <location>
        <begin position="655"/>
        <end position="664"/>
    </location>
</feature>
<feature type="binding site" evidence="2">
    <location>
        <position position="193"/>
    </location>
    <ligand>
        <name>Zn(2+)</name>
        <dbReference type="ChEBI" id="CHEBI:29105"/>
        <label>1</label>
    </ligand>
</feature>
<feature type="binding site" evidence="2">
    <location>
        <position position="196"/>
    </location>
    <ligand>
        <name>Zn(2+)</name>
        <dbReference type="ChEBI" id="CHEBI:29105"/>
        <label>1</label>
    </ligand>
</feature>
<feature type="binding site" evidence="2">
    <location>
        <position position="209"/>
    </location>
    <ligand>
        <name>Zn(2+)</name>
        <dbReference type="ChEBI" id="CHEBI:29105"/>
        <label>2</label>
    </ligand>
</feature>
<feature type="binding site" evidence="2">
    <location>
        <position position="212"/>
    </location>
    <ligand>
        <name>Zn(2+)</name>
        <dbReference type="ChEBI" id="CHEBI:29105"/>
        <label>2</label>
    </ligand>
</feature>
<feature type="binding site" evidence="2">
    <location>
        <position position="217"/>
    </location>
    <ligand>
        <name>Zn(2+)</name>
        <dbReference type="ChEBI" id="CHEBI:29105"/>
        <label>1</label>
    </ligand>
</feature>
<feature type="binding site" evidence="2">
    <location>
        <position position="220"/>
    </location>
    <ligand>
        <name>Zn(2+)</name>
        <dbReference type="ChEBI" id="CHEBI:29105"/>
        <label>1</label>
    </ligand>
</feature>
<feature type="binding site" evidence="2">
    <location>
        <position position="239"/>
    </location>
    <ligand>
        <name>Zn(2+)</name>
        <dbReference type="ChEBI" id="CHEBI:29105"/>
        <label>2</label>
    </ligand>
</feature>
<feature type="binding site" evidence="2">
    <location>
        <position position="242"/>
    </location>
    <ligand>
        <name>Zn(2+)</name>
        <dbReference type="ChEBI" id="CHEBI:29105"/>
        <label>2</label>
    </ligand>
</feature>
<gene>
    <name type="primary">VPS27</name>
    <name type="ORF">PICST_36619</name>
</gene>
<evidence type="ECO:0000250" key="1"/>
<evidence type="ECO:0000255" key="2">
    <source>
        <dbReference type="PROSITE-ProRule" id="PRU00091"/>
    </source>
</evidence>
<evidence type="ECO:0000255" key="3">
    <source>
        <dbReference type="PROSITE-ProRule" id="PRU00213"/>
    </source>
</evidence>
<evidence type="ECO:0000255" key="4">
    <source>
        <dbReference type="PROSITE-ProRule" id="PRU00218"/>
    </source>
</evidence>
<evidence type="ECO:0000256" key="5">
    <source>
        <dbReference type="SAM" id="MobiDB-lite"/>
    </source>
</evidence>
<evidence type="ECO:0000305" key="6"/>
<accession>A3LX75</accession>
<proteinExistence type="inferred from homology"/>
<organism>
    <name type="scientific">Scheffersomyces stipitis (strain ATCC 58785 / CBS 6054 / NBRC 10063 / NRRL Y-11545)</name>
    <name type="common">Yeast</name>
    <name type="synonym">Pichia stipitis</name>
    <dbReference type="NCBI Taxonomy" id="322104"/>
    <lineage>
        <taxon>Eukaryota</taxon>
        <taxon>Fungi</taxon>
        <taxon>Dikarya</taxon>
        <taxon>Ascomycota</taxon>
        <taxon>Saccharomycotina</taxon>
        <taxon>Pichiomycetes</taxon>
        <taxon>Debaryomycetaceae</taxon>
        <taxon>Scheffersomyces</taxon>
    </lineage>
</organism>
<comment type="function">
    <text evidence="1">Component of the ESCRT-0 complex which is the sorting receptor for ubiquitinated cargo proteins at the multivesicular body (MVB) and recruits ESCRT-I to the MVB outer membrane.</text>
</comment>
<comment type="subunit">
    <text>Component of the ESCRT-0 complex composed of HSE1 and VPS27.</text>
</comment>
<comment type="subcellular location">
    <subcellularLocation>
        <location evidence="1">Endosome membrane</location>
        <topology evidence="1">Peripheral membrane protein</topology>
        <orientation evidence="1">Cytoplasmic side</orientation>
    </subcellularLocation>
</comment>
<comment type="domain">
    <text>The FYVE domain is involved in the binding to phosphatidylinositol 3-phosphate (PtdIns(3)P) which is required for the association to endosomal membranes.</text>
</comment>
<comment type="domain">
    <text evidence="1">Both IUM domains are necessary for efficient binding to ubiquitin.</text>
</comment>
<comment type="similarity">
    <text evidence="6">Belongs to the VPS27 family.</text>
</comment>
<reference key="1">
    <citation type="journal article" date="2007" name="Nat. Biotechnol.">
        <title>Genome sequence of the lignocellulose-bioconverting and xylose-fermenting yeast Pichia stipitis.</title>
        <authorList>
            <person name="Jeffries T.W."/>
            <person name="Grigoriev I.V."/>
            <person name="Grimwood J."/>
            <person name="Laplaza J.M."/>
            <person name="Aerts A."/>
            <person name="Salamov A."/>
            <person name="Schmutz J."/>
            <person name="Lindquist E."/>
            <person name="Dehal P."/>
            <person name="Shapiro H."/>
            <person name="Jin Y.-S."/>
            <person name="Passoth V."/>
            <person name="Richardson P.M."/>
        </authorList>
    </citation>
    <scope>NUCLEOTIDE SEQUENCE [LARGE SCALE GENOMIC DNA]</scope>
    <source>
        <strain>ATCC 58785 / CBS 6054 / NBRC 10063 / NRRL Y-11545</strain>
    </source>
</reference>
<keyword id="KW-0967">Endosome</keyword>
<keyword id="KW-0472">Membrane</keyword>
<keyword id="KW-0479">Metal-binding</keyword>
<keyword id="KW-1185">Reference proteome</keyword>
<keyword id="KW-0677">Repeat</keyword>
<keyword id="KW-0862">Zinc</keyword>
<keyword id="KW-0863">Zinc-finger</keyword>
<name>VPS27_PICST</name>
<sequence>MSWFGSSSDSTIELDNKIQEATSESIPNGELDLPLALEVTDLIRSKSLPPIQCMRSLKKRLGMTYSNPNLLSSTLKLVDLCIKNCGSHFLNEIASKEFMDYLVDFIFKVHYDTKNYQVRNSEAKMNVGELILSLIKEWSILFSNSSDLSYVTRCFERLESEAYNFPDFAETSALNSKFVDTEVPPDWVDDDKCMICYDKFSMINRKHHCRACGGVFCQTHSSNFIPLVSLGISKPVRACDNCLAKQKSKNKPSQHNSSSHSRGTSRVQEDDEDEMLRKAIELSLQDTQIPVSAPVARDAPTNSSQTKTITDEDDDEDLKAAIAASMKDYQDQERLREEQQKQWQQEQEEKHHQEEQSDFYNYSIPKPSNYSQQLPYVQSVASLTEEEEADINKFITLMYQVKNDQNISYARLHDEKLTDLHTKVCPLRSKVTKNLIYTVERQKAFTELNNKIAAITRLYEEHLDSKLKQTYGYQQSVPPVQLPEINDYMRGPQSNYEQSIPAQGTGYQQQAGYVHPETTGYPSYPGGQQPIPQQPIAQQPSGSRPSAQQAQKAPEQKHEQQQTSVPTFAYPPQESYPPEGEDDEEQSNFELPPLPNQAQNDFSYPPTQSYDSPSEPMYPNDSTDQQYNVYPPNGAGSEESKDEYSSGELQPVQPTREHVLRTRSSELPPHAVEQASARFPPIDTVEEEYQNSNNSSVPYPDVSFPIAPTQNLQPQQEPPKKFVPEPEPLIDI</sequence>
<dbReference type="EMBL" id="CP000500">
    <property type="protein sequence ID" value="ABN67754.2"/>
    <property type="molecule type" value="Genomic_DNA"/>
</dbReference>
<dbReference type="RefSeq" id="XP_001385783.2">
    <property type="nucleotide sequence ID" value="XM_001385746.1"/>
</dbReference>
<dbReference type="SMR" id="A3LX75"/>
<dbReference type="FunCoup" id="A3LX75">
    <property type="interactions" value="125"/>
</dbReference>
<dbReference type="STRING" id="322104.A3LX75"/>
<dbReference type="GeneID" id="4839973"/>
<dbReference type="KEGG" id="pic:PICST_36619"/>
<dbReference type="eggNOG" id="KOG1818">
    <property type="taxonomic scope" value="Eukaryota"/>
</dbReference>
<dbReference type="HOGENOM" id="CLU_011862_2_0_1"/>
<dbReference type="InParanoid" id="A3LX75"/>
<dbReference type="OMA" id="DQQCSAK"/>
<dbReference type="OrthoDB" id="957735at2759"/>
<dbReference type="Proteomes" id="UP000002258">
    <property type="component" value="Chromosome 6"/>
</dbReference>
<dbReference type="GO" id="GO:0010008">
    <property type="term" value="C:endosome membrane"/>
    <property type="evidence" value="ECO:0007669"/>
    <property type="project" value="UniProtKB-SubCell"/>
</dbReference>
<dbReference type="GO" id="GO:0033565">
    <property type="term" value="C:ESCRT-0 complex"/>
    <property type="evidence" value="ECO:0007669"/>
    <property type="project" value="TreeGrafter"/>
</dbReference>
<dbReference type="GO" id="GO:0032266">
    <property type="term" value="F:phosphatidylinositol-3-phosphate binding"/>
    <property type="evidence" value="ECO:0007669"/>
    <property type="project" value="UniProtKB-ARBA"/>
</dbReference>
<dbReference type="GO" id="GO:0043130">
    <property type="term" value="F:ubiquitin binding"/>
    <property type="evidence" value="ECO:0007669"/>
    <property type="project" value="InterPro"/>
</dbReference>
<dbReference type="GO" id="GO:0008270">
    <property type="term" value="F:zinc ion binding"/>
    <property type="evidence" value="ECO:0007669"/>
    <property type="project" value="UniProtKB-KW"/>
</dbReference>
<dbReference type="GO" id="GO:0006623">
    <property type="term" value="P:protein targeting to vacuole"/>
    <property type="evidence" value="ECO:0007669"/>
    <property type="project" value="TreeGrafter"/>
</dbReference>
<dbReference type="GO" id="GO:0043328">
    <property type="term" value="P:protein transport to vacuole involved in ubiquitin-dependent protein catabolic process via the multivesicular body sorting pathway"/>
    <property type="evidence" value="ECO:0007669"/>
    <property type="project" value="TreeGrafter"/>
</dbReference>
<dbReference type="CDD" id="cd21385">
    <property type="entry name" value="GAT_Vps27"/>
    <property type="match status" value="1"/>
</dbReference>
<dbReference type="CDD" id="cd16979">
    <property type="entry name" value="VHS_Vps27"/>
    <property type="match status" value="1"/>
</dbReference>
<dbReference type="Gene3D" id="1.20.5.1940">
    <property type="match status" value="1"/>
</dbReference>
<dbReference type="Gene3D" id="1.25.40.90">
    <property type="match status" value="1"/>
</dbReference>
<dbReference type="Gene3D" id="6.10.140.100">
    <property type="match status" value="1"/>
</dbReference>
<dbReference type="Gene3D" id="3.30.40.10">
    <property type="entry name" value="Zinc/RING finger domain, C3HC4 (zinc finger)"/>
    <property type="match status" value="1"/>
</dbReference>
<dbReference type="InterPro" id="IPR008942">
    <property type="entry name" value="ENTH_VHS"/>
</dbReference>
<dbReference type="InterPro" id="IPR003903">
    <property type="entry name" value="UIM_dom"/>
</dbReference>
<dbReference type="InterPro" id="IPR002014">
    <property type="entry name" value="VHS_dom"/>
</dbReference>
<dbReference type="InterPro" id="IPR000306">
    <property type="entry name" value="Znf_FYVE"/>
</dbReference>
<dbReference type="InterPro" id="IPR017455">
    <property type="entry name" value="Znf_FYVE-rel"/>
</dbReference>
<dbReference type="InterPro" id="IPR011011">
    <property type="entry name" value="Znf_FYVE_PHD"/>
</dbReference>
<dbReference type="InterPro" id="IPR013083">
    <property type="entry name" value="Znf_RING/FYVE/PHD"/>
</dbReference>
<dbReference type="PANTHER" id="PTHR47794">
    <property type="entry name" value="VACUOLAR PROTEIN SORTING-ASSOCIATED PROTEIN 27"/>
    <property type="match status" value="1"/>
</dbReference>
<dbReference type="PANTHER" id="PTHR47794:SF1">
    <property type="entry name" value="VACUOLAR PROTEIN SORTING-ASSOCIATED PROTEIN 27"/>
    <property type="match status" value="1"/>
</dbReference>
<dbReference type="Pfam" id="PF01363">
    <property type="entry name" value="FYVE"/>
    <property type="match status" value="1"/>
</dbReference>
<dbReference type="Pfam" id="PF02809">
    <property type="entry name" value="UIM"/>
    <property type="match status" value="2"/>
</dbReference>
<dbReference type="Pfam" id="PF00790">
    <property type="entry name" value="VHS"/>
    <property type="match status" value="1"/>
</dbReference>
<dbReference type="SMART" id="SM00064">
    <property type="entry name" value="FYVE"/>
    <property type="match status" value="1"/>
</dbReference>
<dbReference type="SMART" id="SM00726">
    <property type="entry name" value="UIM"/>
    <property type="match status" value="2"/>
</dbReference>
<dbReference type="SMART" id="SM00288">
    <property type="entry name" value="VHS"/>
    <property type="match status" value="1"/>
</dbReference>
<dbReference type="SUPFAM" id="SSF48464">
    <property type="entry name" value="ENTH/VHS domain"/>
    <property type="match status" value="1"/>
</dbReference>
<dbReference type="SUPFAM" id="SSF57903">
    <property type="entry name" value="FYVE/PHD zinc finger"/>
    <property type="match status" value="1"/>
</dbReference>
<dbReference type="PROSITE" id="PS50330">
    <property type="entry name" value="UIM"/>
    <property type="match status" value="2"/>
</dbReference>
<dbReference type="PROSITE" id="PS50179">
    <property type="entry name" value="VHS"/>
    <property type="match status" value="1"/>
</dbReference>
<dbReference type="PROSITE" id="PS50178">
    <property type="entry name" value="ZF_FYVE"/>
    <property type="match status" value="1"/>
</dbReference>
<protein>
    <recommendedName>
        <fullName>Vacuolar protein sorting-associated protein 27</fullName>
    </recommendedName>
</protein>